<dbReference type="EMBL" id="D26176">
    <property type="protein sequence ID" value="BAA05164.1"/>
    <property type="molecule type" value="mRNA"/>
</dbReference>
<dbReference type="EMBL" id="L36854">
    <property type="protein sequence ID" value="AAA79330.1"/>
    <property type="molecule type" value="mRNA"/>
</dbReference>
<dbReference type="EMBL" id="X79406">
    <property type="protein sequence ID" value="CAA55943.1"/>
    <property type="molecule type" value="mRNA"/>
</dbReference>
<dbReference type="EMBL" id="X83391">
    <property type="protein sequence ID" value="CAA58309.1"/>
    <property type="molecule type" value="Genomic_DNA"/>
</dbReference>
<dbReference type="EMBL" id="BC108244">
    <property type="protein sequence ID" value="AAI08245.1"/>
    <property type="molecule type" value="mRNA"/>
</dbReference>
<dbReference type="PIR" id="S52083">
    <property type="entry name" value="S52083"/>
</dbReference>
<dbReference type="RefSeq" id="NP_777253.1">
    <property type="nucleotide sequence ID" value="NM_174828.2"/>
</dbReference>
<dbReference type="SMR" id="P80195"/>
<dbReference type="FunCoup" id="P80195">
    <property type="interactions" value="2"/>
</dbReference>
<dbReference type="MINT" id="P80195"/>
<dbReference type="STRING" id="9913.ENSBTAP00000017854"/>
<dbReference type="GlyConnect" id="318">
    <property type="glycosylation" value="3 O-Linked glycans (1 site)"/>
</dbReference>
<dbReference type="GlyCosmos" id="P80195">
    <property type="glycosylation" value="4 sites, 5 glycans"/>
</dbReference>
<dbReference type="GlyGen" id="P80195">
    <property type="glycosylation" value="4 sites, 5 O-linked glycans (1 site)"/>
</dbReference>
<dbReference type="iPTMnet" id="P80195"/>
<dbReference type="PaxDb" id="9913-ENSBTAP00000017854"/>
<dbReference type="PeptideAtlas" id="P80195"/>
<dbReference type="Ensembl" id="ENSBTAT00000122377.1">
    <property type="protein sequence ID" value="ENSBTAP00000075918.1"/>
    <property type="gene ID" value="ENSBTAG00000063266.1"/>
</dbReference>
<dbReference type="GeneID" id="282430"/>
<dbReference type="KEGG" id="bta:282430"/>
<dbReference type="CTD" id="644076"/>
<dbReference type="VEuPathDB" id="HostDB:ENSBTAG00000013417"/>
<dbReference type="eggNOG" id="ENOG502TDVV">
    <property type="taxonomic scope" value="Eukaryota"/>
</dbReference>
<dbReference type="GeneTree" id="ENSGT00520000060242"/>
<dbReference type="HOGENOM" id="CLU_137449_0_0_1"/>
<dbReference type="InParanoid" id="P80195"/>
<dbReference type="OMA" id="SEEETHW"/>
<dbReference type="OrthoDB" id="9796712at2759"/>
<dbReference type="TreeFam" id="TF339780"/>
<dbReference type="Proteomes" id="UP000009136">
    <property type="component" value="Chromosome 5"/>
</dbReference>
<dbReference type="Bgee" id="ENSBTAG00000013417">
    <property type="expression patterns" value="Expressed in milk and 21 other cell types or tissues"/>
</dbReference>
<dbReference type="GO" id="GO:0016020">
    <property type="term" value="C:membrane"/>
    <property type="evidence" value="ECO:0007669"/>
    <property type="project" value="UniProtKB-SubCell"/>
</dbReference>
<dbReference type="GO" id="GO:0042802">
    <property type="term" value="F:identical protein binding"/>
    <property type="evidence" value="ECO:0000353"/>
    <property type="project" value="IntAct"/>
</dbReference>
<dbReference type="InterPro" id="IPR007906">
    <property type="entry name" value="GLYCAM-1"/>
</dbReference>
<dbReference type="Pfam" id="PF05242">
    <property type="entry name" value="GLYCAM-1"/>
    <property type="match status" value="1"/>
</dbReference>
<accession>P80195</accession>
<accession>P35451</accession>
<accession>Q32P62</accession>
<protein>
    <recommendedName>
        <fullName>Glycosylation-dependent cell adhesion molecule 1</fullName>
        <shortName>GlyCAM-1</shortName>
    </recommendedName>
    <alternativeName>
        <fullName>28 kDa milk glycoprotein PP3</fullName>
    </alternativeName>
    <alternativeName>
        <fullName>Lactophorin</fullName>
    </alternativeName>
    <alternativeName>
        <fullName>Proteose-peptone component 3</fullName>
        <shortName>PP3</shortName>
    </alternativeName>
</protein>
<proteinExistence type="evidence at protein level"/>
<keyword id="KW-0903">Direct protein sequencing</keyword>
<keyword id="KW-0325">Glycoprotein</keyword>
<keyword id="KW-0472">Membrane</keyword>
<keyword id="KW-0597">Phosphoprotein</keyword>
<keyword id="KW-1185">Reference proteome</keyword>
<keyword id="KW-0732">Signal</keyword>
<organism>
    <name type="scientific">Bos taurus</name>
    <name type="common">Bovine</name>
    <dbReference type="NCBI Taxonomy" id="9913"/>
    <lineage>
        <taxon>Eukaryota</taxon>
        <taxon>Metazoa</taxon>
        <taxon>Chordata</taxon>
        <taxon>Craniata</taxon>
        <taxon>Vertebrata</taxon>
        <taxon>Euteleostomi</taxon>
        <taxon>Mammalia</taxon>
        <taxon>Eutheria</taxon>
        <taxon>Laurasiatheria</taxon>
        <taxon>Artiodactyla</taxon>
        <taxon>Ruminantia</taxon>
        <taxon>Pecora</taxon>
        <taxon>Bovidae</taxon>
        <taxon>Bovinae</taxon>
        <taxon>Bos</taxon>
    </lineage>
</organism>
<name>GLCM1_BOVIN</name>
<gene>
    <name type="primary">GLYCAM1</name>
</gene>
<sequence>MKFLCVLLLASLAATSLAILNKPEDETHLEAQPTDASAQFIRNLQISNEDLSKEPSISREDLISKEQIVIRSSRQPQSQNPKLPLSILKEKHLRNATLGSEETTEHTPSDASTTEGKLMELGHKIMRNLENTVKETIKYLKSLFSHAFEVVKT</sequence>
<reference key="1">
    <citation type="submission" date="1993-12" db="EMBL/GenBank/DDBJ databases">
        <title>cDNA cloning of lactophorin from bovine milk.</title>
        <authorList>
            <person name="Kuriki H."/>
            <person name="Motoshima H."/>
            <person name="Minagawa E."/>
            <person name="Tsukasaki F."/>
            <person name="Kanno C."/>
        </authorList>
    </citation>
    <scope>NUCLEOTIDE SEQUENCE [MRNA]</scope>
    <source>
        <tissue>Milk</tissue>
    </source>
</reference>
<reference key="2">
    <citation type="journal article" date="1995" name="Biochim. Biophys. Acta">
        <title>Characterization of a bovine mammary gland PP3 cDNA reveals homology with mouse and rat adhesion molecule GlyCAM-1.</title>
        <authorList>
            <person name="Johnsen L.B."/>
            <person name="Soerensen E.S."/>
            <person name="Petersen T.E."/>
            <person name="Berglund L."/>
        </authorList>
    </citation>
    <scope>NUCLEOTIDE SEQUENCE [MRNA]</scope>
</reference>
<reference key="3">
    <citation type="journal article" date="1995" name="Gene">
        <title>Characterization of a GlyCAM1-like gene (glycosylation-dependent cell adhesion molecule 1) which is highly and specifically expressed in the lactating bovine mammary gland.</title>
        <authorList>
            <person name="Groenen M.A."/>
            <person name="Dijkhof R.J."/>
            <person name="der Poel J.J."/>
        </authorList>
    </citation>
    <scope>NUCLEOTIDE SEQUENCE [GENOMIC DNA]</scope>
    <source>
        <tissue>Lactating mammary gland</tissue>
    </source>
</reference>
<reference key="4">
    <citation type="submission" date="2005-10" db="EMBL/GenBank/DDBJ databases">
        <authorList>
            <consortium name="NIH - Mammalian Gene Collection (MGC) project"/>
        </authorList>
    </citation>
    <scope>NUCLEOTIDE SEQUENCE [LARGE SCALE MRNA]</scope>
    <source>
        <strain>Crossbred X Angus</strain>
        <tissue>Liver</tissue>
    </source>
</reference>
<reference key="5">
    <citation type="journal article" date="1993" name="J. Dairy Res.">
        <title>Phosphorylation, glycosylation and amino acid sequence of component PP3 from the proteose peptone fraction of bovine milk.</title>
        <authorList>
            <person name="Soerensen E.S."/>
            <person name="Petersen T.E."/>
        </authorList>
    </citation>
    <scope>PROTEIN SEQUENCE OF 19-153</scope>
    <scope>PHOSPHORYLATION AT SER-47; SER-52; SER-56; SER-58 AND SER-64</scope>
    <scope>GLYCOSYLATION AT THR-34; ASN-95 AND THR-104</scope>
    <source>
        <tissue>Milk</tissue>
    </source>
</reference>
<reference key="6">
    <citation type="journal article" date="1993" name="J. Dairy Res.">
        <title>Purification and characterization of three proteins isolated from the proteose peptone fraction of bovine milk.</title>
        <authorList>
            <person name="Soerensen E.S."/>
            <person name="Petersen T.E."/>
        </authorList>
    </citation>
    <scope>PROTEIN SEQUENCE OF 19-48 AND 72-91</scope>
    <source>
        <tissue>Milk</tissue>
    </source>
</reference>
<reference key="7">
    <citation type="journal article" date="2003" name="Anal. Chem.">
        <title>Complete characterization of posttranslational modification sites in the bovine milk protein PP3 by tandem mass spectrometry with electron capture dissociation as the last stage.</title>
        <authorList>
            <person name="Kjeldsen F."/>
            <person name="Haselmann K.F."/>
            <person name="Budnik B.A."/>
            <person name="Sorensen E.S."/>
            <person name="Zubarev R.A."/>
        </authorList>
    </citation>
    <scope>PHOSPHORYLATION AT SER-47; SER-52; SER-56; SER-58 AND SER-64</scope>
    <scope>GLYCOSYLATION AT THR-34; SER-78; ASN-95 AND THR-104</scope>
    <source>
        <tissue>Milk</tissue>
    </source>
</reference>
<feature type="signal peptide" evidence="4 5">
    <location>
        <begin position="1"/>
        <end position="18"/>
    </location>
</feature>
<feature type="chain" id="PRO_0000025408" description="Glycosylation-dependent cell adhesion molecule 1">
    <location>
        <begin position="19"/>
        <end position="153"/>
    </location>
</feature>
<feature type="region of interest" description="Disordered" evidence="1">
    <location>
        <begin position="95"/>
        <end position="115"/>
    </location>
</feature>
<feature type="modified residue" description="Phosphoserine" evidence="2 3 4">
    <location>
        <position position="47"/>
    </location>
</feature>
<feature type="modified residue" description="Phosphoserine" evidence="2 3 4">
    <location>
        <position position="52"/>
    </location>
</feature>
<feature type="modified residue" description="Phosphoserine" evidence="2 3 4">
    <location>
        <position position="56"/>
    </location>
</feature>
<feature type="modified residue" description="Phosphoserine" evidence="2 3 4">
    <location>
        <position position="58"/>
    </location>
</feature>
<feature type="modified residue" description="Phosphoserine" evidence="2 3 4">
    <location>
        <position position="64"/>
    </location>
</feature>
<feature type="glycosylation site" description="O-linked (GalNAc...) threonine; partial" evidence="2 3 4">
    <location>
        <position position="34"/>
    </location>
</feature>
<feature type="glycosylation site" description="O-linked (HexNAc...) serine" evidence="2">
    <location>
        <position position="78"/>
    </location>
</feature>
<feature type="glycosylation site" description="N-linked (GlcNAc...) asparagine" evidence="2 3 4">
    <location>
        <position position="95"/>
    </location>
</feature>
<feature type="glycosylation site" id="CAR_000158" description="O-linked (GalNAc...) threonine" evidence="2 4">
    <location>
        <position position="104"/>
    </location>
</feature>
<evidence type="ECO:0000256" key="1">
    <source>
        <dbReference type="SAM" id="MobiDB-lite"/>
    </source>
</evidence>
<evidence type="ECO:0000269" key="2">
    <source>
    </source>
</evidence>
<evidence type="ECO:0000269" key="3">
    <source>
    </source>
</evidence>
<evidence type="ECO:0000269" key="4">
    <source>
    </source>
</evidence>
<evidence type="ECO:0000269" key="5">
    <source>
    </source>
</evidence>
<evidence type="ECO:0000305" key="6"/>
<comment type="interaction">
    <interactant intactId="EBI-7562491">
        <id>P80195</id>
    </interactant>
    <interactant intactId="EBI-7562491">
        <id>P80195</id>
        <label>GLYCAM1</label>
    </interactant>
    <organismsDiffer>false</organismsDiffer>
    <experiments>4</experiments>
</comment>
<comment type="subcellular location">
    <subcellularLocation>
        <location>Membrane</location>
        <topology>Peripheral membrane protein</topology>
    </subcellularLocation>
</comment>
<comment type="tissue specificity">
    <text>Highly and specifically expressed in the lactating mammary gland.</text>
</comment>
<comment type="similarity">
    <text evidence="6">Belongs to the PP3/GlyCAM-1 family.</text>
</comment>